<protein>
    <recommendedName>
        <fullName>5'-AMP-activated protein kinase subunit beta-1</fullName>
        <shortName>AMPK subunit beta-1</shortName>
        <shortName>AMPKb</shortName>
    </recommendedName>
    <alternativeName>
        <fullName>5'-AMP-activated protein kinase 40 kDa subunit</fullName>
    </alternativeName>
</protein>
<accession>P80386</accession>
<accession>Q63048</accession>
<comment type="function">
    <text>Non-catalytic subunit of AMP-activated protein kinase (AMPK), an energy sensor protein kinase that plays a key role in regulating cellular energy metabolism. In response to reduction of intracellular ATP levels, AMPK activates energy-producing pathways and inhibits energy-consuming processes: inhibits protein, carbohydrate and lipid biosynthesis, as well as cell growth and proliferation. AMPK acts via direct phosphorylation of metabolic enzymes, and by longer-term effects via phosphorylation of transcription regulators. Also acts as a regulator of cellular polarity by remodeling the actin cytoskeleton; probably by indirectly activating myosin. Beta non-catalytic subunit acts as a scaffold on which the AMPK complex assembles, via its C-terminus that bridges alpha (PRKAA1 or PRKAA2) and gamma subunits (PRKAG1, PRKAG2 or PRKAG3).</text>
</comment>
<comment type="subunit">
    <text evidence="6">AMPK is a heterotrimer of an alpha catalytic subunit (PRKAA1 or PRKAA2), a beta (PRKAB1 or PRKAB2) and a gamma non-catalytic subunits (PRKAG1, PRKAG2 or PRKAG3). Interacts with FNIP1 and FNIP2.</text>
</comment>
<comment type="tissue specificity">
    <text>Highly expressed in kidney, heart, white adipose tissue, lung and spleen.</text>
</comment>
<comment type="domain">
    <text evidence="6">The glycogen-binding domain may target AMPK to glycogen so that other factors like glycogen-bound debranching enzyme or protein phosphatases can directly affect AMPK activity.</text>
</comment>
<comment type="PTM">
    <text evidence="4 5 7 8">Phosphorylated when associated with the catalytic subunit (PRKAA1 or PRKAA2). Phosphorylated by ULK1; leading to negatively regulate AMPK activity and suggesting the existence of a regulatory feedback loop between ULK1 and AMPK.</text>
</comment>
<comment type="similarity">
    <text evidence="9">Belongs to the 5'-AMP-activated protein kinase beta subunit family.</text>
</comment>
<proteinExistence type="evidence at protein level"/>
<gene>
    <name type="primary">Prkab1</name>
</gene>
<organism>
    <name type="scientific">Rattus norvegicus</name>
    <name type="common">Rat</name>
    <dbReference type="NCBI Taxonomy" id="10116"/>
    <lineage>
        <taxon>Eukaryota</taxon>
        <taxon>Metazoa</taxon>
        <taxon>Chordata</taxon>
        <taxon>Craniata</taxon>
        <taxon>Vertebrata</taxon>
        <taxon>Euteleostomi</taxon>
        <taxon>Mammalia</taxon>
        <taxon>Eutheria</taxon>
        <taxon>Euarchontoglires</taxon>
        <taxon>Glires</taxon>
        <taxon>Rodentia</taxon>
        <taxon>Myomorpha</taxon>
        <taxon>Muroidea</taxon>
        <taxon>Muridae</taxon>
        <taxon>Murinae</taxon>
        <taxon>Rattus</taxon>
    </lineage>
</organism>
<feature type="initiator methionine" description="Removed">
    <location>
        <position position="1"/>
    </location>
</feature>
<feature type="chain" id="PRO_0000204367" description="5'-AMP-activated protein kinase subunit beta-1">
    <location>
        <begin position="2"/>
        <end position="270"/>
    </location>
</feature>
<feature type="region of interest" description="Disordered" evidence="3">
    <location>
        <begin position="1"/>
        <end position="43"/>
    </location>
</feature>
<feature type="region of interest" description="Glycogen-binding domain">
    <location>
        <begin position="68"/>
        <end position="163"/>
    </location>
</feature>
<feature type="compositionally biased region" description="Basic and acidic residues" evidence="3">
    <location>
        <begin position="9"/>
        <end position="36"/>
    </location>
</feature>
<feature type="modified residue" description="Phosphothreonine" evidence="2">
    <location>
        <position position="4"/>
    </location>
</feature>
<feature type="modified residue" description="Phosphoserine" evidence="2">
    <location>
        <position position="5"/>
    </location>
</feature>
<feature type="modified residue" description="Phosphoserine" evidence="2">
    <location>
        <position position="6"/>
    </location>
</feature>
<feature type="modified residue" description="Phosphothreonine" evidence="2">
    <location>
        <position position="19"/>
    </location>
</feature>
<feature type="modified residue" description="Phosphoserine; by autocatalysis" evidence="4 8">
    <location>
        <position position="24"/>
    </location>
</feature>
<feature type="modified residue" description="Phosphoserine; by autocatalysis" evidence="4 8">
    <location>
        <position position="25"/>
    </location>
</feature>
<feature type="modified residue" description="Phosphoserine" evidence="10">
    <location>
        <position position="40"/>
    </location>
</feature>
<feature type="modified residue" description="Phosphoserine" evidence="5">
    <location>
        <position position="96"/>
    </location>
</feature>
<feature type="modified residue" description="Phosphoserine" evidence="5">
    <location>
        <position position="101"/>
    </location>
</feature>
<feature type="modified residue" description="Phosphoserine; by autocatalysis" evidence="4 5 8 10">
    <location>
        <position position="108"/>
    </location>
</feature>
<feature type="modified residue" description="Phosphothreonine" evidence="2">
    <location>
        <position position="148"/>
    </location>
</feature>
<feature type="modified residue" description="Phosphoserine" evidence="4 8">
    <location>
        <position position="182"/>
    </location>
</feature>
<feature type="modified residue" description="N6-succinyllysine" evidence="1">
    <location>
        <position position="201"/>
    </location>
</feature>
<feature type="lipid moiety-binding region" description="N-myristoyl glycine" evidence="4 8">
    <location>
        <position position="2"/>
    </location>
</feature>
<feature type="mutagenesis site" description="Abolishes glycogen-binding." evidence="6">
    <original>W</original>
    <variation>G</variation>
    <location>
        <position position="100"/>
    </location>
</feature>
<feature type="mutagenesis site" description="Partially inhibits glycogen-binding." evidence="6">
    <original>W</original>
    <variation>L</variation>
    <location>
        <position position="100"/>
    </location>
</feature>
<feature type="mutagenesis site" description="Abolishes glycogen-binding." evidence="6">
    <original>K</original>
    <variation>Q</variation>
    <location>
        <position position="126"/>
    </location>
</feature>
<feature type="mutagenesis site" description="Significantly reduces glycogen-binding." evidence="6">
    <original>L</original>
    <variation>A</variation>
    <location>
        <position position="146"/>
    </location>
</feature>
<feature type="mutagenesis site" description="Abolishes glycogen-binding." evidence="6">
    <original>N</original>
    <variation>K</variation>
    <location>
        <position position="150"/>
    </location>
</feature>
<feature type="mutagenesis site" description="Significantly reduces glycogen-binding." evidence="6">
    <original>N</original>
    <variation>Q</variation>
    <location>
        <position position="150"/>
    </location>
</feature>
<feature type="sequence conflict" description="In Ref. 1; AAC52579." evidence="9" ref="1">
    <original>G</original>
    <variation>E</variation>
    <location>
        <position position="26"/>
    </location>
</feature>
<feature type="sequence conflict" description="In Ref. 4; AA sequence." evidence="9" ref="4">
    <original>M</original>
    <variation>I</variation>
    <location>
        <position position="52"/>
    </location>
</feature>
<feature type="strand" evidence="11">
    <location>
        <begin position="78"/>
        <end position="84"/>
    </location>
</feature>
<feature type="strand" evidence="11">
    <location>
        <begin position="91"/>
        <end position="95"/>
    </location>
</feature>
<feature type="helix" evidence="11">
    <location>
        <begin position="96"/>
        <end position="98"/>
    </location>
</feature>
<feature type="strand" evidence="15">
    <location>
        <begin position="102"/>
        <end position="104"/>
    </location>
</feature>
<feature type="strand" evidence="11">
    <location>
        <begin position="106"/>
        <end position="108"/>
    </location>
</feature>
<feature type="strand" evidence="11">
    <location>
        <begin position="111"/>
        <end position="118"/>
    </location>
</feature>
<feature type="strand" evidence="11">
    <location>
        <begin position="120"/>
        <end position="129"/>
    </location>
</feature>
<feature type="strand" evidence="11">
    <location>
        <begin position="132"/>
        <end position="134"/>
    </location>
</feature>
<feature type="strand" evidence="11">
    <location>
        <begin position="141"/>
        <end position="143"/>
    </location>
</feature>
<feature type="strand" evidence="11">
    <location>
        <begin position="149"/>
        <end position="155"/>
    </location>
</feature>
<feature type="helix" evidence="16">
    <location>
        <begin position="157"/>
        <end position="159"/>
    </location>
</feature>
<feature type="strand" evidence="11">
    <location>
        <begin position="161"/>
        <end position="163"/>
    </location>
</feature>
<feature type="helix" evidence="14">
    <location>
        <begin position="164"/>
        <end position="170"/>
    </location>
</feature>
<feature type="helix" evidence="16">
    <location>
        <begin position="208"/>
        <end position="211"/>
    </location>
</feature>
<feature type="turn" evidence="16">
    <location>
        <begin position="214"/>
        <end position="216"/>
    </location>
</feature>
<feature type="strand" evidence="16">
    <location>
        <begin position="225"/>
        <end position="227"/>
    </location>
</feature>
<feature type="helix" evidence="16">
    <location>
        <begin position="233"/>
        <end position="235"/>
    </location>
</feature>
<feature type="strand" evidence="13">
    <location>
        <begin position="240"/>
        <end position="245"/>
    </location>
</feature>
<feature type="strand" evidence="12">
    <location>
        <begin position="248"/>
        <end position="257"/>
    </location>
</feature>
<feature type="strand" evidence="12">
    <location>
        <begin position="260"/>
        <end position="269"/>
    </location>
</feature>
<keyword id="KW-0002">3D-structure</keyword>
<keyword id="KW-0903">Direct protein sequencing</keyword>
<keyword id="KW-0275">Fatty acid biosynthesis</keyword>
<keyword id="KW-0276">Fatty acid metabolism</keyword>
<keyword id="KW-0444">Lipid biosynthesis</keyword>
<keyword id="KW-0443">Lipid metabolism</keyword>
<keyword id="KW-0449">Lipoprotein</keyword>
<keyword id="KW-0519">Myristate</keyword>
<keyword id="KW-0597">Phosphoprotein</keyword>
<keyword id="KW-1185">Reference proteome</keyword>
<reference key="1">
    <citation type="journal article" date="1996" name="J. Biol. Chem.">
        <title>Non-catalytic beta- and gamma-subunit isoforms of the 5'-AMP-activated protein kinase.</title>
        <authorList>
            <person name="Gao G."/>
            <person name="Fernandez C.S."/>
            <person name="Stapleton D."/>
            <person name="Auster A.S."/>
            <person name="Widmer J."/>
            <person name="Dyck J.R.B."/>
            <person name="Kemp B.E."/>
            <person name="Witters L.A."/>
        </authorList>
    </citation>
    <scope>NUCLEOTIDE SEQUENCE [MRNA]</scope>
    <scope>PARTIAL PROTEIN SEQUENCE</scope>
    <source>
        <strain>Sprague-Dawley</strain>
        <tissue>Liver</tissue>
    </source>
</reference>
<reference key="2">
    <citation type="journal article" date="1996" name="J. Biol. Chem.">
        <title>Characterization of AMP-activated protein kinase beta and gamma subunits. Assembly of the heterotrimeric complex in vitro.</title>
        <authorList>
            <person name="Woods A."/>
            <person name="Cheung P.C.F."/>
            <person name="Smith F.C."/>
            <person name="Davison M.D."/>
            <person name="Scott J."/>
            <person name="Beri R.K."/>
            <person name="Carling D."/>
        </authorList>
    </citation>
    <scope>NUCLEOTIDE SEQUENCE [MRNA]</scope>
    <source>
        <strain>Wistar</strain>
    </source>
</reference>
<reference key="3">
    <citation type="journal article" date="2004" name="Genome Res.">
        <title>The status, quality, and expansion of the NIH full-length cDNA project: the Mammalian Gene Collection (MGC).</title>
        <authorList>
            <consortium name="The MGC Project Team"/>
        </authorList>
    </citation>
    <scope>NUCLEOTIDE SEQUENCE [LARGE SCALE MRNA]</scope>
    <source>
        <tissue>Prostate</tissue>
    </source>
</reference>
<reference key="4">
    <citation type="journal article" date="1994" name="J. Biol. Chem.">
        <title>Mammalian 5'-AMP-activated protein kinase non-catalytic subunits are homologs of proteins that interact with yeast Snf1 protein kinase.</title>
        <authorList>
            <person name="Stapleton D."/>
            <person name="Gao G."/>
            <person name="Michell B.J."/>
            <person name="Widmer J."/>
            <person name="Mitchelhill K.I."/>
            <person name="Teh T."/>
            <person name="House C.M."/>
            <person name="Witters L.A."/>
            <person name="Kemp B.E."/>
        </authorList>
    </citation>
    <scope>NUCLEOTIDE SEQUENCE [MRNA] OF 36-159</scope>
    <scope>PROTEIN SEQUENCE OF 36-72; 79-83 AND 90-159</scope>
    <source>
        <strain>Sprague-Dawley</strain>
        <tissue>Liver</tissue>
    </source>
</reference>
<reference key="5">
    <citation type="journal article" date="1997" name="J. Biol. Chem.">
        <title>Posttranslational modifications of the 5'-AMP-activated protein kinase beta1 subunit.</title>
        <authorList>
            <person name="Mitchelhill K.I."/>
            <person name="Michell B.J."/>
            <person name="House C.M."/>
            <person name="Stapleton D."/>
            <person name="Dyck J."/>
            <person name="Gamble J."/>
            <person name="Ullrich C."/>
            <person name="Witters L.A."/>
            <person name="Kemp B.E."/>
        </authorList>
    </citation>
    <scope>PARTIAL PROTEIN SEQUENCE</scope>
    <scope>MYRISTOYLATION AT GLY-2</scope>
    <scope>PHOSPHORYLATION AT SER-24; SER-25; SER-108 AND SER-182</scope>
</reference>
<reference key="6">
    <citation type="journal article" date="2001" name="Biochem. J.">
        <title>Post-translational modifications of the beta-1 subunit of AMP-activated protein kinase affect enzyme activity and cellular localization.</title>
        <authorList>
            <person name="Warden S.M."/>
            <person name="Richardson C."/>
            <person name="O'Donnell J. Jr."/>
            <person name="Stapleton D."/>
            <person name="Kemp B.E."/>
            <person name="Witters L.A."/>
        </authorList>
    </citation>
    <scope>MUTAGENESIS</scope>
    <scope>MYRISTOYLATION AT GLY-2</scope>
    <scope>PHOSPHORYLATION AT SER-24; SER-25; SER-108 AND SER-182</scope>
</reference>
<reference key="7">
    <citation type="journal article" date="2003" name="J. Biol. Chem.">
        <title>Identification of phosphorylation sites in AMP-activated protein kinase (AMPK) for upstream AMPK kinases and study of their roles by site-directed mutagenesis.</title>
        <authorList>
            <person name="Woods A."/>
            <person name="Vertommen D."/>
            <person name="Neumann D."/>
            <person name="Turk R."/>
            <person name="Bayliss J."/>
            <person name="Schlattner U."/>
            <person name="Wallimann T."/>
            <person name="Carling D."/>
            <person name="Rider M.H."/>
        </authorList>
    </citation>
    <scope>PHOSPHORYLATION AT SER-96; SER-101 AND SER-108</scope>
</reference>
<reference key="8">
    <citation type="journal article" date="2011" name="Autophagy">
        <title>Ulk1-mediated phosphorylation of AMPK constitutes a negative regulatory feedback loop.</title>
        <authorList>
            <person name="Loffler A.S."/>
            <person name="Alers S."/>
            <person name="Dieterle A.M."/>
            <person name="Keppeler H."/>
            <person name="Franz-Wachtel M."/>
            <person name="Kundu M."/>
            <person name="Campbell D.G."/>
            <person name="Wesselborg S."/>
            <person name="Alessi D.R."/>
            <person name="Stork B."/>
        </authorList>
    </citation>
    <scope>PHOSPHORYLATION BY ULK1</scope>
</reference>
<reference key="9">
    <citation type="journal article" date="2012" name="Nat. Commun.">
        <title>Quantitative maps of protein phosphorylation sites across 14 different rat organs and tissues.</title>
        <authorList>
            <person name="Lundby A."/>
            <person name="Secher A."/>
            <person name="Lage K."/>
            <person name="Nordsborg N.B."/>
            <person name="Dmytriyev A."/>
            <person name="Lundby C."/>
            <person name="Olsen J.V."/>
        </authorList>
    </citation>
    <scope>PHOSPHORYLATION [LARGE SCALE ANALYSIS] AT SER-40 AND SER-108</scope>
    <scope>IDENTIFICATION BY MASS SPECTROMETRY [LARGE SCALE ANALYSIS]</scope>
</reference>
<reference key="10">
    <citation type="journal article" date="2005" name="Structure">
        <title>Structural basis for glycogen recognition by AMP-activated protein kinase.</title>
        <authorList>
            <person name="Polekhina G."/>
            <person name="Gupta A."/>
            <person name="van Denderen B.J."/>
            <person name="Feil S.C."/>
            <person name="Kemp B.E."/>
            <person name="Stapleton D."/>
            <person name="Parker M.W."/>
        </authorList>
    </citation>
    <scope>X-RAY CRYSTALLOGRAPHY (1.49 ANGSTROMS) OF 68-162 IN COMPLEX WITH BETA-CYCLODEXTRIN</scope>
    <scope>DOMAIN GLYCOGEN-BINDING</scope>
    <scope>MUTAGENESIS OF TRP-100; LYS-126; LEU-146 AND ASN-150</scope>
</reference>
<name>AAKB1_RAT</name>
<evidence type="ECO:0000250" key="1">
    <source>
        <dbReference type="UniProtKB" id="Q9R078"/>
    </source>
</evidence>
<evidence type="ECO:0000250" key="2">
    <source>
        <dbReference type="UniProtKB" id="Q9Y478"/>
    </source>
</evidence>
<evidence type="ECO:0000256" key="3">
    <source>
        <dbReference type="SAM" id="MobiDB-lite"/>
    </source>
</evidence>
<evidence type="ECO:0000269" key="4">
    <source>
    </source>
</evidence>
<evidence type="ECO:0000269" key="5">
    <source>
    </source>
</evidence>
<evidence type="ECO:0000269" key="6">
    <source>
    </source>
</evidence>
<evidence type="ECO:0000269" key="7">
    <source>
    </source>
</evidence>
<evidence type="ECO:0000269" key="8">
    <source>
    </source>
</evidence>
<evidence type="ECO:0000305" key="9"/>
<evidence type="ECO:0007744" key="10">
    <source>
    </source>
</evidence>
<evidence type="ECO:0007829" key="11">
    <source>
        <dbReference type="PDB" id="1Z0N"/>
    </source>
</evidence>
<evidence type="ECO:0007829" key="12">
    <source>
        <dbReference type="PDB" id="4EAK"/>
    </source>
</evidence>
<evidence type="ECO:0007829" key="13">
    <source>
        <dbReference type="PDB" id="4EAL"/>
    </source>
</evidence>
<evidence type="ECO:0007829" key="14">
    <source>
        <dbReference type="PDB" id="4QFG"/>
    </source>
</evidence>
<evidence type="ECO:0007829" key="15">
    <source>
        <dbReference type="PDB" id="4YEF"/>
    </source>
</evidence>
<evidence type="ECO:0007829" key="16">
    <source>
        <dbReference type="PDB" id="6E4U"/>
    </source>
</evidence>
<sequence length="270" mass="30394">MGNTSSERAALERQAGHKTPRRDSSGGTKDGDRPKILMDSPEDADIFHTEEMKAPEKEEFLAWQHDLEVNEKAPAQARPTVFRWTGGGKEVYLSGSFNNWSKLPLTRSQNNFVAILDLPEGEHQYKFFVDGQWTHDPSEPIVTSQLGTVNNIIQVKKTDFEVFDALMVDSQKCSDVSELSSSPPGPYHQEPYISKPEERFKAPPILPPHLLQVILNKDTGISCDPALLPEPNHVMLNHLYALSIKDGVMVLSATHRYKKKYVTTLLYKPI</sequence>
<dbReference type="EMBL" id="U42411">
    <property type="protein sequence ID" value="AAC52579.1"/>
    <property type="molecule type" value="mRNA"/>
</dbReference>
<dbReference type="EMBL" id="BC062008">
    <property type="protein sequence ID" value="AAH62008.1"/>
    <property type="molecule type" value="mRNA"/>
</dbReference>
<dbReference type="EMBL" id="X95577">
    <property type="protein sequence ID" value="CAA64830.1"/>
    <property type="molecule type" value="mRNA"/>
</dbReference>
<dbReference type="RefSeq" id="NP_114182.2">
    <property type="nucleotide sequence ID" value="NM_031976.2"/>
</dbReference>
<dbReference type="RefSeq" id="XP_006249543.1">
    <property type="nucleotide sequence ID" value="XM_006249481.5"/>
</dbReference>
<dbReference type="PDB" id="1Z0M">
    <property type="method" value="X-ray"/>
    <property type="resolution" value="1.91 A"/>
    <property type="chains" value="A/B/C=68-163"/>
</dbReference>
<dbReference type="PDB" id="1Z0N">
    <property type="method" value="X-ray"/>
    <property type="resolution" value="1.49 A"/>
    <property type="chains" value="A/B/C=68-163"/>
</dbReference>
<dbReference type="PDB" id="4EAG">
    <property type="method" value="X-ray"/>
    <property type="resolution" value="2.70 A"/>
    <property type="chains" value="B=187-270"/>
</dbReference>
<dbReference type="PDB" id="4EAK">
    <property type="method" value="X-ray"/>
    <property type="resolution" value="2.50 A"/>
    <property type="chains" value="B=200-270"/>
</dbReference>
<dbReference type="PDB" id="4EAL">
    <property type="method" value="X-ray"/>
    <property type="resolution" value="2.51 A"/>
    <property type="chains" value="B=200-270"/>
</dbReference>
<dbReference type="PDB" id="4QFG">
    <property type="method" value="X-ray"/>
    <property type="resolution" value="3.46 A"/>
    <property type="chains" value="B=68-270"/>
</dbReference>
<dbReference type="PDB" id="4QFR">
    <property type="method" value="X-ray"/>
    <property type="resolution" value="3.34 A"/>
    <property type="chains" value="B=68-270"/>
</dbReference>
<dbReference type="PDB" id="4QFS">
    <property type="method" value="X-ray"/>
    <property type="resolution" value="3.55 A"/>
    <property type="chains" value="B=68-270"/>
</dbReference>
<dbReference type="PDB" id="4YEF">
    <property type="method" value="X-ray"/>
    <property type="resolution" value="1.72 A"/>
    <property type="chains" value="A/B/C/D/E/F/G=76-156"/>
</dbReference>
<dbReference type="PDB" id="5KQ5">
    <property type="method" value="X-ray"/>
    <property type="resolution" value="3.41 A"/>
    <property type="chains" value="B=68-270"/>
</dbReference>
<dbReference type="PDB" id="5T5T">
    <property type="method" value="X-ray"/>
    <property type="resolution" value="3.46 A"/>
    <property type="chains" value="B=68-270"/>
</dbReference>
<dbReference type="PDB" id="5UFU">
    <property type="method" value="X-ray"/>
    <property type="resolution" value="3.45 A"/>
    <property type="chains" value="B=67-270"/>
</dbReference>
<dbReference type="PDB" id="6E4T">
    <property type="method" value="X-ray"/>
    <property type="resolution" value="3.40 A"/>
    <property type="chains" value="B=67-270"/>
</dbReference>
<dbReference type="PDB" id="6E4U">
    <property type="method" value="X-ray"/>
    <property type="resolution" value="3.27 A"/>
    <property type="chains" value="B=67-270"/>
</dbReference>
<dbReference type="PDB" id="6E4W">
    <property type="method" value="X-ray"/>
    <property type="resolution" value="3.35 A"/>
    <property type="chains" value="B=67-270"/>
</dbReference>
<dbReference type="PDBsum" id="1Z0M"/>
<dbReference type="PDBsum" id="1Z0N"/>
<dbReference type="PDBsum" id="4EAG"/>
<dbReference type="PDBsum" id="4EAK"/>
<dbReference type="PDBsum" id="4EAL"/>
<dbReference type="PDBsum" id="4QFG"/>
<dbReference type="PDBsum" id="4QFR"/>
<dbReference type="PDBsum" id="4QFS"/>
<dbReference type="PDBsum" id="4YEF"/>
<dbReference type="PDBsum" id="5KQ5"/>
<dbReference type="PDBsum" id="5T5T"/>
<dbReference type="PDBsum" id="5UFU"/>
<dbReference type="PDBsum" id="6E4T"/>
<dbReference type="PDBsum" id="6E4U"/>
<dbReference type="PDBsum" id="6E4W"/>
<dbReference type="SMR" id="P80386"/>
<dbReference type="BioGRID" id="249839">
    <property type="interactions" value="243"/>
</dbReference>
<dbReference type="DIP" id="DIP-59127N"/>
<dbReference type="FunCoup" id="P80386">
    <property type="interactions" value="2908"/>
</dbReference>
<dbReference type="IntAct" id="P80386">
    <property type="interactions" value="177"/>
</dbReference>
<dbReference type="STRING" id="10116.ENSRNOP00000001508"/>
<dbReference type="BindingDB" id="P80386"/>
<dbReference type="ChEMBL" id="CHEMBL5054"/>
<dbReference type="CAZy" id="CBM48">
    <property type="family name" value="Carbohydrate-Binding Module Family 48"/>
</dbReference>
<dbReference type="iPTMnet" id="P80386"/>
<dbReference type="PhosphoSitePlus" id="P80386"/>
<dbReference type="jPOST" id="P80386"/>
<dbReference type="PaxDb" id="10116-ENSRNOP00000001508"/>
<dbReference type="DNASU" id="83803"/>
<dbReference type="Ensembl" id="ENSRNOT00000001508.4">
    <property type="protein sequence ID" value="ENSRNOP00000001508.1"/>
    <property type="gene ID" value="ENSRNOG00000001142.4"/>
</dbReference>
<dbReference type="GeneID" id="83803"/>
<dbReference type="KEGG" id="rno:83803"/>
<dbReference type="UCSC" id="RGD:71057">
    <property type="organism name" value="rat"/>
</dbReference>
<dbReference type="AGR" id="RGD:71057"/>
<dbReference type="CTD" id="5564"/>
<dbReference type="RGD" id="71057">
    <property type="gene designation" value="Prkab1"/>
</dbReference>
<dbReference type="eggNOG" id="KOG1616">
    <property type="taxonomic scope" value="Eukaryota"/>
</dbReference>
<dbReference type="GeneTree" id="ENSGT00940000155307"/>
<dbReference type="HOGENOM" id="CLU_070949_2_0_1"/>
<dbReference type="InParanoid" id="P80386"/>
<dbReference type="OMA" id="QRTINAP"/>
<dbReference type="OrthoDB" id="531008at2759"/>
<dbReference type="PhylomeDB" id="P80386"/>
<dbReference type="TreeFam" id="TF313827"/>
<dbReference type="BRENDA" id="2.7.11.31">
    <property type="organism ID" value="5301"/>
</dbReference>
<dbReference type="Reactome" id="R-RNO-1632852">
    <property type="pathway name" value="Macroautophagy"/>
</dbReference>
<dbReference type="Reactome" id="R-RNO-380972">
    <property type="pathway name" value="Energy dependent regulation of mTOR by LKB1-AMPK"/>
</dbReference>
<dbReference type="Reactome" id="R-RNO-5628897">
    <property type="pathway name" value="TP53 Regulates Metabolic Genes"/>
</dbReference>
<dbReference type="Reactome" id="R-RNO-6804756">
    <property type="pathway name" value="Regulation of TP53 Activity through Phosphorylation"/>
</dbReference>
<dbReference type="EvolutionaryTrace" id="P80386"/>
<dbReference type="PRO" id="PR:P80386"/>
<dbReference type="Proteomes" id="UP000002494">
    <property type="component" value="Chromosome 12"/>
</dbReference>
<dbReference type="Bgee" id="ENSRNOG00000001142">
    <property type="expression patterns" value="Expressed in heart and 20 other cell types or tissues"/>
</dbReference>
<dbReference type="GO" id="GO:0005737">
    <property type="term" value="C:cytoplasm"/>
    <property type="evidence" value="ECO:0000318"/>
    <property type="project" value="GO_Central"/>
</dbReference>
<dbReference type="GO" id="GO:0005829">
    <property type="term" value="C:cytosol"/>
    <property type="evidence" value="ECO:0000304"/>
    <property type="project" value="Reactome"/>
</dbReference>
<dbReference type="GO" id="GO:0031588">
    <property type="term" value="C:nucleotide-activated protein kinase complex"/>
    <property type="evidence" value="ECO:0000314"/>
    <property type="project" value="RGD"/>
</dbReference>
<dbReference type="GO" id="GO:0005634">
    <property type="term" value="C:nucleus"/>
    <property type="evidence" value="ECO:0000266"/>
    <property type="project" value="RGD"/>
</dbReference>
<dbReference type="GO" id="GO:0032991">
    <property type="term" value="C:protein-containing complex"/>
    <property type="evidence" value="ECO:0000314"/>
    <property type="project" value="RGD"/>
</dbReference>
<dbReference type="GO" id="GO:0019901">
    <property type="term" value="F:protein kinase binding"/>
    <property type="evidence" value="ECO:0000353"/>
    <property type="project" value="RGD"/>
</dbReference>
<dbReference type="GO" id="GO:0031669">
    <property type="term" value="P:cellular response to nutrient levels"/>
    <property type="evidence" value="ECO:0000266"/>
    <property type="project" value="RGD"/>
</dbReference>
<dbReference type="GO" id="GO:0006633">
    <property type="term" value="P:fatty acid biosynthetic process"/>
    <property type="evidence" value="ECO:0007669"/>
    <property type="project" value="UniProtKB-KW"/>
</dbReference>
<dbReference type="GO" id="GO:0035878">
    <property type="term" value="P:nail development"/>
    <property type="evidence" value="ECO:0000266"/>
    <property type="project" value="RGD"/>
</dbReference>
<dbReference type="GO" id="GO:0120162">
    <property type="term" value="P:positive regulation of cold-induced thermogenesis"/>
    <property type="evidence" value="ECO:0000250"/>
    <property type="project" value="YuBioLab"/>
</dbReference>
<dbReference type="GO" id="GO:0007165">
    <property type="term" value="P:signal transduction"/>
    <property type="evidence" value="ECO:0000318"/>
    <property type="project" value="GO_Central"/>
</dbReference>
<dbReference type="CDD" id="cd02859">
    <property type="entry name" value="E_set_AMPKbeta_like_N"/>
    <property type="match status" value="1"/>
</dbReference>
<dbReference type="FunFam" id="2.60.40.10:FF:000139">
    <property type="entry name" value="Protein kinase AMP-activated non-catalytic subunit beta 1"/>
    <property type="match status" value="1"/>
</dbReference>
<dbReference type="Gene3D" id="6.20.250.60">
    <property type="match status" value="1"/>
</dbReference>
<dbReference type="Gene3D" id="2.60.40.10">
    <property type="entry name" value="Immunoglobulins"/>
    <property type="match status" value="1"/>
</dbReference>
<dbReference type="InterPro" id="IPR032640">
    <property type="entry name" value="AMPK1_CBM"/>
</dbReference>
<dbReference type="InterPro" id="IPR006828">
    <property type="entry name" value="ASC_dom"/>
</dbReference>
<dbReference type="InterPro" id="IPR037256">
    <property type="entry name" value="ASC_dom_sf"/>
</dbReference>
<dbReference type="InterPro" id="IPR050827">
    <property type="entry name" value="CRP1_MDG1_kinase"/>
</dbReference>
<dbReference type="InterPro" id="IPR013783">
    <property type="entry name" value="Ig-like_fold"/>
</dbReference>
<dbReference type="InterPro" id="IPR014756">
    <property type="entry name" value="Ig_E-set"/>
</dbReference>
<dbReference type="PANTHER" id="PTHR10343">
    <property type="entry name" value="5'-AMP-ACTIVATED PROTEIN KINASE , BETA SUBUNIT"/>
    <property type="match status" value="1"/>
</dbReference>
<dbReference type="PANTHER" id="PTHR10343:SF84">
    <property type="entry name" value="5'-AMP-ACTIVATED PROTEIN KINASE SUBUNIT BETA-1"/>
    <property type="match status" value="1"/>
</dbReference>
<dbReference type="Pfam" id="PF16561">
    <property type="entry name" value="AMPK1_CBM"/>
    <property type="match status" value="1"/>
</dbReference>
<dbReference type="Pfam" id="PF04739">
    <property type="entry name" value="AMPKBI"/>
    <property type="match status" value="1"/>
</dbReference>
<dbReference type="SMART" id="SM01010">
    <property type="entry name" value="AMPKBI"/>
    <property type="match status" value="1"/>
</dbReference>
<dbReference type="SUPFAM" id="SSF160219">
    <property type="entry name" value="AMPKBI-like"/>
    <property type="match status" value="1"/>
</dbReference>
<dbReference type="SUPFAM" id="SSF81296">
    <property type="entry name" value="E set domains"/>
    <property type="match status" value="1"/>
</dbReference>